<proteinExistence type="inferred from homology"/>
<organism>
    <name type="scientific">Legionella pneumophila (strain Corby)</name>
    <dbReference type="NCBI Taxonomy" id="400673"/>
    <lineage>
        <taxon>Bacteria</taxon>
        <taxon>Pseudomonadati</taxon>
        <taxon>Pseudomonadota</taxon>
        <taxon>Gammaproteobacteria</taxon>
        <taxon>Legionellales</taxon>
        <taxon>Legionellaceae</taxon>
        <taxon>Legionella</taxon>
    </lineage>
</organism>
<name>PGK_LEGPC</name>
<dbReference type="EC" id="2.7.2.3" evidence="1"/>
<dbReference type="EMBL" id="CP000675">
    <property type="protein sequence ID" value="ABQ54157.1"/>
    <property type="molecule type" value="Genomic_DNA"/>
</dbReference>
<dbReference type="RefSeq" id="WP_011945333.1">
    <property type="nucleotide sequence ID" value="NC_009494.2"/>
</dbReference>
<dbReference type="SMR" id="A5I9V7"/>
<dbReference type="KEGG" id="lpc:LPC_0158"/>
<dbReference type="HOGENOM" id="CLU_025427_0_2_6"/>
<dbReference type="UniPathway" id="UPA00109">
    <property type="reaction ID" value="UER00185"/>
</dbReference>
<dbReference type="GO" id="GO:0005829">
    <property type="term" value="C:cytosol"/>
    <property type="evidence" value="ECO:0007669"/>
    <property type="project" value="TreeGrafter"/>
</dbReference>
<dbReference type="GO" id="GO:0043531">
    <property type="term" value="F:ADP binding"/>
    <property type="evidence" value="ECO:0007669"/>
    <property type="project" value="TreeGrafter"/>
</dbReference>
<dbReference type="GO" id="GO:0005524">
    <property type="term" value="F:ATP binding"/>
    <property type="evidence" value="ECO:0007669"/>
    <property type="project" value="UniProtKB-KW"/>
</dbReference>
<dbReference type="GO" id="GO:0004618">
    <property type="term" value="F:phosphoglycerate kinase activity"/>
    <property type="evidence" value="ECO:0007669"/>
    <property type="project" value="UniProtKB-UniRule"/>
</dbReference>
<dbReference type="GO" id="GO:0006094">
    <property type="term" value="P:gluconeogenesis"/>
    <property type="evidence" value="ECO:0007669"/>
    <property type="project" value="TreeGrafter"/>
</dbReference>
<dbReference type="GO" id="GO:0006096">
    <property type="term" value="P:glycolytic process"/>
    <property type="evidence" value="ECO:0007669"/>
    <property type="project" value="UniProtKB-UniRule"/>
</dbReference>
<dbReference type="FunFam" id="3.40.50.1260:FF:000001">
    <property type="entry name" value="Phosphoglycerate kinase"/>
    <property type="match status" value="1"/>
</dbReference>
<dbReference type="FunFam" id="3.40.50.1260:FF:000002">
    <property type="entry name" value="Phosphoglycerate kinase"/>
    <property type="match status" value="1"/>
</dbReference>
<dbReference type="Gene3D" id="3.40.50.1260">
    <property type="entry name" value="Phosphoglycerate kinase, N-terminal domain"/>
    <property type="match status" value="2"/>
</dbReference>
<dbReference type="HAMAP" id="MF_00145">
    <property type="entry name" value="Phosphoglyc_kinase"/>
    <property type="match status" value="1"/>
</dbReference>
<dbReference type="InterPro" id="IPR001576">
    <property type="entry name" value="Phosphoglycerate_kinase"/>
</dbReference>
<dbReference type="InterPro" id="IPR015911">
    <property type="entry name" value="Phosphoglycerate_kinase_CS"/>
</dbReference>
<dbReference type="InterPro" id="IPR015824">
    <property type="entry name" value="Phosphoglycerate_kinase_N"/>
</dbReference>
<dbReference type="InterPro" id="IPR036043">
    <property type="entry name" value="Phosphoglycerate_kinase_sf"/>
</dbReference>
<dbReference type="PANTHER" id="PTHR11406">
    <property type="entry name" value="PHOSPHOGLYCERATE KINASE"/>
    <property type="match status" value="1"/>
</dbReference>
<dbReference type="PANTHER" id="PTHR11406:SF23">
    <property type="entry name" value="PHOSPHOGLYCERATE KINASE 1, CHLOROPLASTIC-RELATED"/>
    <property type="match status" value="1"/>
</dbReference>
<dbReference type="Pfam" id="PF00162">
    <property type="entry name" value="PGK"/>
    <property type="match status" value="1"/>
</dbReference>
<dbReference type="PIRSF" id="PIRSF000724">
    <property type="entry name" value="Pgk"/>
    <property type="match status" value="1"/>
</dbReference>
<dbReference type="PRINTS" id="PR00477">
    <property type="entry name" value="PHGLYCKINASE"/>
</dbReference>
<dbReference type="SUPFAM" id="SSF53748">
    <property type="entry name" value="Phosphoglycerate kinase"/>
    <property type="match status" value="1"/>
</dbReference>
<dbReference type="PROSITE" id="PS00111">
    <property type="entry name" value="PGLYCERATE_KINASE"/>
    <property type="match status" value="1"/>
</dbReference>
<accession>A5I9V7</accession>
<comment type="catalytic activity">
    <reaction evidence="1">
        <text>(2R)-3-phosphoglycerate + ATP = (2R)-3-phospho-glyceroyl phosphate + ADP</text>
        <dbReference type="Rhea" id="RHEA:14801"/>
        <dbReference type="ChEBI" id="CHEBI:30616"/>
        <dbReference type="ChEBI" id="CHEBI:57604"/>
        <dbReference type="ChEBI" id="CHEBI:58272"/>
        <dbReference type="ChEBI" id="CHEBI:456216"/>
        <dbReference type="EC" id="2.7.2.3"/>
    </reaction>
</comment>
<comment type="pathway">
    <text evidence="1">Carbohydrate degradation; glycolysis; pyruvate from D-glyceraldehyde 3-phosphate: step 2/5.</text>
</comment>
<comment type="subunit">
    <text evidence="1">Monomer.</text>
</comment>
<comment type="subcellular location">
    <subcellularLocation>
        <location evidence="1">Cytoplasm</location>
    </subcellularLocation>
</comment>
<comment type="similarity">
    <text evidence="1">Belongs to the phosphoglycerate kinase family.</text>
</comment>
<protein>
    <recommendedName>
        <fullName evidence="1">Phosphoglycerate kinase</fullName>
        <ecNumber evidence="1">2.7.2.3</ecNumber>
    </recommendedName>
</protein>
<evidence type="ECO:0000255" key="1">
    <source>
        <dbReference type="HAMAP-Rule" id="MF_00145"/>
    </source>
</evidence>
<keyword id="KW-0067">ATP-binding</keyword>
<keyword id="KW-0963">Cytoplasm</keyword>
<keyword id="KW-0324">Glycolysis</keyword>
<keyword id="KW-0418">Kinase</keyword>
<keyword id="KW-0547">Nucleotide-binding</keyword>
<keyword id="KW-0808">Transferase</keyword>
<gene>
    <name evidence="1" type="primary">pgk</name>
    <name type="ordered locus">LPC_0158</name>
</gene>
<sequence>MNLIKMSDIDLSGKRVLIREDLNVPIKDGMITSDQRLQAALPTIKSALDSGAAVIVLSHLGRPEEGKYEKKFSLEPVADYLRENLEYPVRFVKDYLTGVDVNPGELVVCENVRFNPGEKGNDEALAKKLASLCDVFVMDAFGTAHRAQASTYGVAQYAPVAVAGPLLIRELEALNQVLKAPKKPIVAIVGGAKVSSKLSLLKQLVGMVDVLIPGGGIANTFLKAQGFEIGISLYEPDLLDEARHILILAKEKGCQIPLPTDVVVGKTFSETCPAFNKSLSNVAADDMILDIGPETIRDYVDLIHEANTIIWNGPVGVFEFPQFAYGTRAIAIAIAESDAFSIAGGGDTLAAVDLYDLNQQISYISTGGGAFLECLEGKTLPAVAILQERAKHVKTN</sequence>
<feature type="chain" id="PRO_1000058006" description="Phosphoglycerate kinase">
    <location>
        <begin position="1"/>
        <end position="396"/>
    </location>
</feature>
<feature type="binding site" evidence="1">
    <location>
        <begin position="21"/>
        <end position="23"/>
    </location>
    <ligand>
        <name>substrate</name>
    </ligand>
</feature>
<feature type="binding site" evidence="1">
    <location>
        <position position="36"/>
    </location>
    <ligand>
        <name>substrate</name>
    </ligand>
</feature>
<feature type="binding site" evidence="1">
    <location>
        <begin position="59"/>
        <end position="62"/>
    </location>
    <ligand>
        <name>substrate</name>
    </ligand>
</feature>
<feature type="binding site" evidence="1">
    <location>
        <position position="113"/>
    </location>
    <ligand>
        <name>substrate</name>
    </ligand>
</feature>
<feature type="binding site" evidence="1">
    <location>
        <position position="146"/>
    </location>
    <ligand>
        <name>substrate</name>
    </ligand>
</feature>
<feature type="binding site" evidence="1">
    <location>
        <position position="197"/>
    </location>
    <ligand>
        <name>ATP</name>
        <dbReference type="ChEBI" id="CHEBI:30616"/>
    </ligand>
</feature>
<feature type="binding site" evidence="1">
    <location>
        <position position="319"/>
    </location>
    <ligand>
        <name>ATP</name>
        <dbReference type="ChEBI" id="CHEBI:30616"/>
    </ligand>
</feature>
<feature type="binding site" evidence="1">
    <location>
        <begin position="345"/>
        <end position="348"/>
    </location>
    <ligand>
        <name>ATP</name>
        <dbReference type="ChEBI" id="CHEBI:30616"/>
    </ligand>
</feature>
<reference key="1">
    <citation type="submission" date="2006-11" db="EMBL/GenBank/DDBJ databases">
        <title>Identification and characterization of a new conjugation/ type IVA secretion system (trb/tra) of L. pneumophila Corby localized on a mobile genomic island.</title>
        <authorList>
            <person name="Gloeckner G."/>
            <person name="Albert-Weissenberger C."/>
            <person name="Weinmann E."/>
            <person name="Jacobi S."/>
            <person name="Schunder E."/>
            <person name="Steinert M."/>
            <person name="Buchrieser C."/>
            <person name="Hacker J."/>
            <person name="Heuner K."/>
        </authorList>
    </citation>
    <scope>NUCLEOTIDE SEQUENCE [LARGE SCALE GENOMIC DNA]</scope>
    <source>
        <strain>Corby</strain>
    </source>
</reference>